<proteinExistence type="inferred from homology"/>
<comment type="function">
    <text evidence="1">Xylosylphosphotransferase that is specific for UDP-xylose as a donor and mannose as an acceptor to form a xylose-alpha-1-phosphate-6-mannose linkage. Functions in the O-glycosylation of proteins en route through the secretory pathway (By similarity).</text>
</comment>
<comment type="catalytic activity">
    <reaction>
        <text>3-alpha-D-mannopyranosyl-alpha-D-mannopyranose + UDP-alpha-D-xylose = 3-O-(6-O-alpha-D-xylosylphospho-alpha-D-mannopyranosyl)-alpha-D-mannopyranose + UMP + H(+)</text>
        <dbReference type="Rhea" id="RHEA:28262"/>
        <dbReference type="ChEBI" id="CHEBI:15378"/>
        <dbReference type="ChEBI" id="CHEBI:57632"/>
        <dbReference type="ChEBI" id="CHEBI:57865"/>
        <dbReference type="ChEBI" id="CHEBI:61663"/>
        <dbReference type="ChEBI" id="CHEBI:61665"/>
        <dbReference type="EC" id="2.7.8.32"/>
    </reaction>
</comment>
<comment type="cofactor">
    <cofactor evidence="1">
        <name>Mn(2+)</name>
        <dbReference type="ChEBI" id="CHEBI:29035"/>
    </cofactor>
</comment>
<comment type="subcellular location">
    <subcellularLocation>
        <location evidence="1">Golgi apparatus membrane</location>
        <topology evidence="1">Single-pass type I membrane protein</topology>
    </subcellularLocation>
</comment>
<comment type="similarity">
    <text evidence="4">Belongs to the XPT1 family.</text>
</comment>
<gene>
    <name type="primary">XPT1</name>
    <name type="ordered locus">CGB_I4040W</name>
</gene>
<reference key="1">
    <citation type="journal article" date="2011" name="MBio">
        <title>Genome variation in Cryptococcus gattii, an emerging pathogen of immunocompetent hosts.</title>
        <authorList>
            <person name="D'Souza C.A."/>
            <person name="Kronstad J.W."/>
            <person name="Taylor G."/>
            <person name="Warren R."/>
            <person name="Yuen M."/>
            <person name="Hu G."/>
            <person name="Jung W.H."/>
            <person name="Sham A."/>
            <person name="Kidd S.E."/>
            <person name="Tangen K."/>
            <person name="Lee N."/>
            <person name="Zeilmaker T."/>
            <person name="Sawkins J."/>
            <person name="McVicker G."/>
            <person name="Shah S."/>
            <person name="Gnerre S."/>
            <person name="Griggs A."/>
            <person name="Zeng Q."/>
            <person name="Bartlett K."/>
            <person name="Li W."/>
            <person name="Wang X."/>
            <person name="Heitman J."/>
            <person name="Stajich J.E."/>
            <person name="Fraser J.A."/>
            <person name="Meyer W."/>
            <person name="Carter D."/>
            <person name="Schein J."/>
            <person name="Krzywinski M."/>
            <person name="Kwon-Chung K.J."/>
            <person name="Varma A."/>
            <person name="Wang J."/>
            <person name="Brunham R."/>
            <person name="Fyfe M."/>
            <person name="Ouellette B.F.F."/>
            <person name="Siddiqui A."/>
            <person name="Marra M."/>
            <person name="Jones S."/>
            <person name="Holt R."/>
            <person name="Birren B.W."/>
            <person name="Galagan J.E."/>
            <person name="Cuomo C.A."/>
        </authorList>
    </citation>
    <scope>NUCLEOTIDE SEQUENCE [LARGE SCALE GENOMIC DNA]</scope>
    <source>
        <strain>WM276 / ATCC MYA-4071</strain>
    </source>
</reference>
<dbReference type="EC" id="2.7.8.32"/>
<dbReference type="EMBL" id="CP000294">
    <property type="protein sequence ID" value="ADV24468.1"/>
    <property type="molecule type" value="Genomic_DNA"/>
</dbReference>
<dbReference type="RefSeq" id="XP_003196255.1">
    <property type="nucleotide sequence ID" value="XM_003196207.1"/>
</dbReference>
<dbReference type="GlyCosmos" id="E6RCE9">
    <property type="glycosylation" value="2 sites, No reported glycans"/>
</dbReference>
<dbReference type="GeneID" id="10186567"/>
<dbReference type="KEGG" id="cgi:CGB_I4040W"/>
<dbReference type="VEuPathDB" id="FungiDB:CGB_I4040W"/>
<dbReference type="eggNOG" id="ENOG502QV1P">
    <property type="taxonomic scope" value="Eukaryota"/>
</dbReference>
<dbReference type="HOGENOM" id="CLU_005484_2_0_1"/>
<dbReference type="OrthoDB" id="263283at2759"/>
<dbReference type="Proteomes" id="UP000007805">
    <property type="component" value="Chromosome I"/>
</dbReference>
<dbReference type="GO" id="GO:0000139">
    <property type="term" value="C:Golgi membrane"/>
    <property type="evidence" value="ECO:0007669"/>
    <property type="project" value="UniProtKB-SubCell"/>
</dbReference>
<dbReference type="GO" id="GO:0016757">
    <property type="term" value="F:glycosyltransferase activity"/>
    <property type="evidence" value="ECO:0007669"/>
    <property type="project" value="UniProtKB-KW"/>
</dbReference>
<dbReference type="GO" id="GO:0003976">
    <property type="term" value="F:UDP-N-acetylglucosamine-lysosomal-enzyme N-acetylglucosaminephosphotransferase activity"/>
    <property type="evidence" value="ECO:0007669"/>
    <property type="project" value="TreeGrafter"/>
</dbReference>
<dbReference type="GO" id="GO:0046835">
    <property type="term" value="P:carbohydrate phosphorylation"/>
    <property type="evidence" value="ECO:0007669"/>
    <property type="project" value="TreeGrafter"/>
</dbReference>
<dbReference type="GO" id="GO:0042732">
    <property type="term" value="P:D-xylose metabolic process"/>
    <property type="evidence" value="ECO:0007669"/>
    <property type="project" value="UniProtKB-KW"/>
</dbReference>
<dbReference type="InterPro" id="IPR047141">
    <property type="entry name" value="Stealth"/>
</dbReference>
<dbReference type="InterPro" id="IPR031357">
    <property type="entry name" value="Stealth_CR3"/>
</dbReference>
<dbReference type="InterPro" id="IPR031356">
    <property type="entry name" value="Stealth_CR4"/>
</dbReference>
<dbReference type="PANTHER" id="PTHR24045">
    <property type="match status" value="1"/>
</dbReference>
<dbReference type="PANTHER" id="PTHR24045:SF0">
    <property type="entry name" value="N-ACETYLGLUCOSAMINE-1-PHOSPHOTRANSFERASE SUBUNITS ALPHA_BETA"/>
    <property type="match status" value="1"/>
</dbReference>
<dbReference type="Pfam" id="PF17102">
    <property type="entry name" value="Stealth_CR3"/>
    <property type="match status" value="1"/>
</dbReference>
<dbReference type="Pfam" id="PF17103">
    <property type="entry name" value="Stealth_CR4"/>
    <property type="match status" value="1"/>
</dbReference>
<name>XPT1_CRYGW</name>
<keyword id="KW-0119">Carbohydrate metabolism</keyword>
<keyword id="KW-0325">Glycoprotein</keyword>
<keyword id="KW-0328">Glycosyltransferase</keyword>
<keyword id="KW-0333">Golgi apparatus</keyword>
<keyword id="KW-0464">Manganese</keyword>
<keyword id="KW-0472">Membrane</keyword>
<keyword id="KW-0808">Transferase</keyword>
<keyword id="KW-0812">Transmembrane</keyword>
<keyword id="KW-1133">Transmembrane helix</keyword>
<keyword id="KW-0859">Xylose metabolism</keyword>
<accession>E6RCE9</accession>
<protein>
    <recommendedName>
        <fullName>3-O-alpha-D-mannopyranosyl-alpha-D-mannopyranose xylosylphosphotransferase</fullName>
        <ecNumber>2.7.8.32</ecNumber>
    </recommendedName>
    <alternativeName>
        <fullName>Xylosylphosphotransferase 1</fullName>
    </alternativeName>
</protein>
<evidence type="ECO:0000250" key="1"/>
<evidence type="ECO:0000255" key="2"/>
<evidence type="ECO:0000256" key="3">
    <source>
        <dbReference type="SAM" id="MobiDB-lite"/>
    </source>
</evidence>
<evidence type="ECO:0000305" key="4"/>
<sequence>MLSTALSPSSPHADYNSYSSSLSPTSPRFHASSAPHGRRSPSPSRLESLLDAPLPSCRPSRSPRSRKIRDALARHIRPHLTPRTLTMLFLWMLSVWSIHHFFLPISSLSRLSNPRAEEHFLSTAFPPPPQRIGDDHLDSVDPRWRAYHPLPAPDPPFPRLRPTRFLPPQCLEQWFAEGETLCGAKELGEEEKLDATWLWVNGSDHRWRDSMIEWREKENVNSPERHFREQNELVHSMRSVLDALPGHLRTFHLILADYTFNYPEDLELVPFSIIPDLEKVASKSKGRRHPRDLPGTPPSFSNLTERVTPESISASLASHLQSEWRIVQTPTWLDFSRRDPSDPSHPFHPYSVSKAGERGQHYAEASYPTLRYASHWEVFHTPSVDRDGRQELMGEREWRENEWKKKALPTFNSMAIESRIGWLPGLADAIIALNDDFFLLRPHAVSDFHSPLYGSVIRFDHGYNQQVRPEVVKSHINDPGEIGGLYHANAILSQRFPHRLRPYFAHVPKVITRGLHHEASLMFKEALTESSTRRFREMKIGEGDVQMQWLLTSLRVERWREALLWTWVVANMGTISGSQDRWDDATRTAIKDMFGFTENDNDVVKIEVHRGERWTLEPGRMQKAFEQAGWEAPKATEFLFSSMDGTMPPLLKHGEDPAQNDRCMIDLNRCFGVFWTREEDILSTDMMKRLTFQYPECGDCMIMALVTASGTLGLNAFFPPKETTVTAPELAPGDGYPKFLPPPHLPLTPTWHEADFSLANILSTTALPGEQVDIRQYCMRLLSRYLYLDARSVSHFHMLKSAEHAQRVFKMIQDNPRVSILGMNDDIESDYDEVKRLMNEWFEMRWPRKAVWEREWDPVKDRYID</sequence>
<feature type="chain" id="PRO_0000418547" description="3-O-alpha-D-mannopyranosyl-alpha-D-mannopyranose xylosylphosphotransferase">
    <location>
        <begin position="1"/>
        <end position="865"/>
    </location>
</feature>
<feature type="topological domain" description="Cytoplasmic" evidence="2">
    <location>
        <begin position="1"/>
        <end position="84"/>
    </location>
</feature>
<feature type="transmembrane region" description="Helical" evidence="2">
    <location>
        <begin position="85"/>
        <end position="105"/>
    </location>
</feature>
<feature type="topological domain" description="Lumenal" evidence="2">
    <location>
        <begin position="106"/>
        <end position="865"/>
    </location>
</feature>
<feature type="region of interest" description="Disordered" evidence="3">
    <location>
        <begin position="1"/>
        <end position="66"/>
    </location>
</feature>
<feature type="region of interest" description="Disordered" evidence="3">
    <location>
        <begin position="283"/>
        <end position="304"/>
    </location>
</feature>
<feature type="compositionally biased region" description="Polar residues" evidence="3">
    <location>
        <begin position="1"/>
        <end position="10"/>
    </location>
</feature>
<feature type="compositionally biased region" description="Low complexity" evidence="3">
    <location>
        <begin position="17"/>
        <end position="26"/>
    </location>
</feature>
<feature type="compositionally biased region" description="Low complexity" evidence="3">
    <location>
        <begin position="40"/>
        <end position="60"/>
    </location>
</feature>
<feature type="glycosylation site" description="N-linked (GlcNAc...) asparagine" evidence="2">
    <location>
        <position position="201"/>
    </location>
</feature>
<feature type="glycosylation site" description="N-linked (GlcNAc...) asparagine" evidence="2">
    <location>
        <position position="302"/>
    </location>
</feature>
<organism>
    <name type="scientific">Cryptococcus gattii serotype B (strain WM276 / ATCC MYA-4071)</name>
    <name type="common">Filobasidiella gattii</name>
    <name type="synonym">Cryptococcus bacillisporus</name>
    <dbReference type="NCBI Taxonomy" id="367775"/>
    <lineage>
        <taxon>Eukaryota</taxon>
        <taxon>Fungi</taxon>
        <taxon>Dikarya</taxon>
        <taxon>Basidiomycota</taxon>
        <taxon>Agaricomycotina</taxon>
        <taxon>Tremellomycetes</taxon>
        <taxon>Tremellales</taxon>
        <taxon>Cryptococcaceae</taxon>
        <taxon>Cryptococcus</taxon>
        <taxon>Cryptococcus gattii species complex</taxon>
    </lineage>
</organism>